<keyword id="KW-0256">Endoplasmic reticulum</keyword>
<keyword id="KW-0349">Heme</keyword>
<keyword id="KW-0408">Iron</keyword>
<keyword id="KW-0472">Membrane</keyword>
<keyword id="KW-0479">Metal-binding</keyword>
<keyword id="KW-0492">Microsome</keyword>
<keyword id="KW-0503">Monooxygenase</keyword>
<keyword id="KW-0560">Oxidoreductase</keyword>
<keyword id="KW-1185">Reference proteome</keyword>
<protein>
    <recommendedName>
        <fullName>Probable cytochrome P450 6a14</fullName>
        <ecNumber>1.14.-.-</ecNumber>
    </recommendedName>
    <alternativeName>
        <fullName>CYPVIA14</fullName>
    </alternativeName>
</protein>
<reference key="1">
    <citation type="journal article" date="2000" name="Science">
        <title>The genome sequence of Drosophila melanogaster.</title>
        <authorList>
            <person name="Adams M.D."/>
            <person name="Celniker S.E."/>
            <person name="Holt R.A."/>
            <person name="Evans C.A."/>
            <person name="Gocayne J.D."/>
            <person name="Amanatides P.G."/>
            <person name="Scherer S.E."/>
            <person name="Li P.W."/>
            <person name="Hoskins R.A."/>
            <person name="Galle R.F."/>
            <person name="George R.A."/>
            <person name="Lewis S.E."/>
            <person name="Richards S."/>
            <person name="Ashburner M."/>
            <person name="Henderson S.N."/>
            <person name="Sutton G.G."/>
            <person name="Wortman J.R."/>
            <person name="Yandell M.D."/>
            <person name="Zhang Q."/>
            <person name="Chen L.X."/>
            <person name="Brandon R.C."/>
            <person name="Rogers Y.-H.C."/>
            <person name="Blazej R.G."/>
            <person name="Champe M."/>
            <person name="Pfeiffer B.D."/>
            <person name="Wan K.H."/>
            <person name="Doyle C."/>
            <person name="Baxter E.G."/>
            <person name="Helt G."/>
            <person name="Nelson C.R."/>
            <person name="Miklos G.L.G."/>
            <person name="Abril J.F."/>
            <person name="Agbayani A."/>
            <person name="An H.-J."/>
            <person name="Andrews-Pfannkoch C."/>
            <person name="Baldwin D."/>
            <person name="Ballew R.M."/>
            <person name="Basu A."/>
            <person name="Baxendale J."/>
            <person name="Bayraktaroglu L."/>
            <person name="Beasley E.M."/>
            <person name="Beeson K.Y."/>
            <person name="Benos P.V."/>
            <person name="Berman B.P."/>
            <person name="Bhandari D."/>
            <person name="Bolshakov S."/>
            <person name="Borkova D."/>
            <person name="Botchan M.R."/>
            <person name="Bouck J."/>
            <person name="Brokstein P."/>
            <person name="Brottier P."/>
            <person name="Burtis K.C."/>
            <person name="Busam D.A."/>
            <person name="Butler H."/>
            <person name="Cadieu E."/>
            <person name="Center A."/>
            <person name="Chandra I."/>
            <person name="Cherry J.M."/>
            <person name="Cawley S."/>
            <person name="Dahlke C."/>
            <person name="Davenport L.B."/>
            <person name="Davies P."/>
            <person name="de Pablos B."/>
            <person name="Delcher A."/>
            <person name="Deng Z."/>
            <person name="Mays A.D."/>
            <person name="Dew I."/>
            <person name="Dietz S.M."/>
            <person name="Dodson K."/>
            <person name="Doup L.E."/>
            <person name="Downes M."/>
            <person name="Dugan-Rocha S."/>
            <person name="Dunkov B.C."/>
            <person name="Dunn P."/>
            <person name="Durbin K.J."/>
            <person name="Evangelista C.C."/>
            <person name="Ferraz C."/>
            <person name="Ferriera S."/>
            <person name="Fleischmann W."/>
            <person name="Fosler C."/>
            <person name="Gabrielian A.E."/>
            <person name="Garg N.S."/>
            <person name="Gelbart W.M."/>
            <person name="Glasser K."/>
            <person name="Glodek A."/>
            <person name="Gong F."/>
            <person name="Gorrell J.H."/>
            <person name="Gu Z."/>
            <person name="Guan P."/>
            <person name="Harris M."/>
            <person name="Harris N.L."/>
            <person name="Harvey D.A."/>
            <person name="Heiman T.J."/>
            <person name="Hernandez J.R."/>
            <person name="Houck J."/>
            <person name="Hostin D."/>
            <person name="Houston K.A."/>
            <person name="Howland T.J."/>
            <person name="Wei M.-H."/>
            <person name="Ibegwam C."/>
            <person name="Jalali M."/>
            <person name="Kalush F."/>
            <person name="Karpen G.H."/>
            <person name="Ke Z."/>
            <person name="Kennison J.A."/>
            <person name="Ketchum K.A."/>
            <person name="Kimmel B.E."/>
            <person name="Kodira C.D."/>
            <person name="Kraft C.L."/>
            <person name="Kravitz S."/>
            <person name="Kulp D."/>
            <person name="Lai Z."/>
            <person name="Lasko P."/>
            <person name="Lei Y."/>
            <person name="Levitsky A.A."/>
            <person name="Li J.H."/>
            <person name="Li Z."/>
            <person name="Liang Y."/>
            <person name="Lin X."/>
            <person name="Liu X."/>
            <person name="Mattei B."/>
            <person name="McIntosh T.C."/>
            <person name="McLeod M.P."/>
            <person name="McPherson D."/>
            <person name="Merkulov G."/>
            <person name="Milshina N.V."/>
            <person name="Mobarry C."/>
            <person name="Morris J."/>
            <person name="Moshrefi A."/>
            <person name="Mount S.M."/>
            <person name="Moy M."/>
            <person name="Murphy B."/>
            <person name="Murphy L."/>
            <person name="Muzny D.M."/>
            <person name="Nelson D.L."/>
            <person name="Nelson D.R."/>
            <person name="Nelson K.A."/>
            <person name="Nixon K."/>
            <person name="Nusskern D.R."/>
            <person name="Pacleb J.M."/>
            <person name="Palazzolo M."/>
            <person name="Pittman G.S."/>
            <person name="Pan S."/>
            <person name="Pollard J."/>
            <person name="Puri V."/>
            <person name="Reese M.G."/>
            <person name="Reinert K."/>
            <person name="Remington K."/>
            <person name="Saunders R.D.C."/>
            <person name="Scheeler F."/>
            <person name="Shen H."/>
            <person name="Shue B.C."/>
            <person name="Siden-Kiamos I."/>
            <person name="Simpson M."/>
            <person name="Skupski M.P."/>
            <person name="Smith T.J."/>
            <person name="Spier E."/>
            <person name="Spradling A.C."/>
            <person name="Stapleton M."/>
            <person name="Strong R."/>
            <person name="Sun E."/>
            <person name="Svirskas R."/>
            <person name="Tector C."/>
            <person name="Turner R."/>
            <person name="Venter E."/>
            <person name="Wang A.H."/>
            <person name="Wang X."/>
            <person name="Wang Z.-Y."/>
            <person name="Wassarman D.A."/>
            <person name="Weinstock G.M."/>
            <person name="Weissenbach J."/>
            <person name="Williams S.M."/>
            <person name="Woodage T."/>
            <person name="Worley K.C."/>
            <person name="Wu D."/>
            <person name="Yang S."/>
            <person name="Yao Q.A."/>
            <person name="Ye J."/>
            <person name="Yeh R.-F."/>
            <person name="Zaveri J.S."/>
            <person name="Zhan M."/>
            <person name="Zhang G."/>
            <person name="Zhao Q."/>
            <person name="Zheng L."/>
            <person name="Zheng X.H."/>
            <person name="Zhong F.N."/>
            <person name="Zhong W."/>
            <person name="Zhou X."/>
            <person name="Zhu S.C."/>
            <person name="Zhu X."/>
            <person name="Smith H.O."/>
            <person name="Gibbs R.A."/>
            <person name="Myers E.W."/>
            <person name="Rubin G.M."/>
            <person name="Venter J.C."/>
        </authorList>
    </citation>
    <scope>NUCLEOTIDE SEQUENCE [LARGE SCALE GENOMIC DNA]</scope>
    <source>
        <strain>Berkeley</strain>
    </source>
</reference>
<reference key="2">
    <citation type="journal article" date="2002" name="Genome Biol.">
        <title>Annotation of the Drosophila melanogaster euchromatic genome: a systematic review.</title>
        <authorList>
            <person name="Misra S."/>
            <person name="Crosby M.A."/>
            <person name="Mungall C.J."/>
            <person name="Matthews B.B."/>
            <person name="Campbell K.S."/>
            <person name="Hradecky P."/>
            <person name="Huang Y."/>
            <person name="Kaminker J.S."/>
            <person name="Millburn G.H."/>
            <person name="Prochnik S.E."/>
            <person name="Smith C.D."/>
            <person name="Tupy J.L."/>
            <person name="Whitfield E.J."/>
            <person name="Bayraktaroglu L."/>
            <person name="Berman B.P."/>
            <person name="Bettencourt B.R."/>
            <person name="Celniker S.E."/>
            <person name="de Grey A.D.N.J."/>
            <person name="Drysdale R.A."/>
            <person name="Harris N.L."/>
            <person name="Richter J."/>
            <person name="Russo S."/>
            <person name="Schroeder A.J."/>
            <person name="Shu S.Q."/>
            <person name="Stapleton M."/>
            <person name="Yamada C."/>
            <person name="Ashburner M."/>
            <person name="Gelbart W.M."/>
            <person name="Rubin G.M."/>
            <person name="Lewis S.E."/>
        </authorList>
    </citation>
    <scope>GENOME REANNOTATION</scope>
    <source>
        <strain>Berkeley</strain>
    </source>
</reference>
<reference key="3">
    <citation type="unpublished observations" date="2000-09">
        <authorList>
            <person name="Nelson B."/>
        </authorList>
    </citation>
    <scope>CONCEPTUAL TRANSLATION</scope>
</reference>
<accession>Q9V4U7</accession>
<accession>A0A0B4LEW9</accession>
<gene>
    <name type="primary">Cyp6a14</name>
    <name type="ORF">CG8687</name>
</gene>
<proteinExistence type="inferred from homology"/>
<organism>
    <name type="scientific">Drosophila melanogaster</name>
    <name type="common">Fruit fly</name>
    <dbReference type="NCBI Taxonomy" id="7227"/>
    <lineage>
        <taxon>Eukaryota</taxon>
        <taxon>Metazoa</taxon>
        <taxon>Ecdysozoa</taxon>
        <taxon>Arthropoda</taxon>
        <taxon>Hexapoda</taxon>
        <taxon>Insecta</taxon>
        <taxon>Pterygota</taxon>
        <taxon>Neoptera</taxon>
        <taxon>Endopterygota</taxon>
        <taxon>Diptera</taxon>
        <taxon>Brachycera</taxon>
        <taxon>Muscomorpha</taxon>
        <taxon>Ephydroidea</taxon>
        <taxon>Drosophilidae</taxon>
        <taxon>Drosophila</taxon>
        <taxon>Sophophora</taxon>
    </lineage>
</organism>
<name>C6A14_DROME</name>
<evidence type="ECO:0000250" key="1"/>
<evidence type="ECO:0000305" key="2"/>
<feature type="chain" id="PRO_0000051870" description="Probable cytochrome P450 6a14">
    <location>
        <begin position="1"/>
        <end position="509"/>
    </location>
</feature>
<feature type="binding site" description="axial binding residue" evidence="1">
    <location>
        <position position="454"/>
    </location>
    <ligand>
        <name>heme</name>
        <dbReference type="ChEBI" id="CHEBI:30413"/>
    </ligand>
    <ligandPart>
        <name>Fe</name>
        <dbReference type="ChEBI" id="CHEBI:18248"/>
    </ligandPart>
</feature>
<dbReference type="EC" id="1.14.-.-"/>
<dbReference type="EMBL" id="AE013599">
    <property type="protein sequence ID" value="AHN55997.1"/>
    <property type="molecule type" value="Genomic_DNA"/>
</dbReference>
<dbReference type="RefSeq" id="NP_001286199.1">
    <property type="nucleotide sequence ID" value="NM_001299270.1"/>
</dbReference>
<dbReference type="RefSeq" id="NP_610389.3">
    <property type="nucleotide sequence ID" value="NM_136545.3"/>
</dbReference>
<dbReference type="SMR" id="Q9V4U7"/>
<dbReference type="FunCoup" id="Q9V4U7">
    <property type="interactions" value="5"/>
</dbReference>
<dbReference type="IntAct" id="Q9V4U7">
    <property type="interactions" value="1"/>
</dbReference>
<dbReference type="STRING" id="7227.FBpp0311646"/>
<dbReference type="PaxDb" id="7227-FBpp0302888"/>
<dbReference type="EnsemblMetazoa" id="FBtr0302331">
    <property type="protein sequence ID" value="FBpp0311645"/>
    <property type="gene ID" value="FBgn0033302"/>
</dbReference>
<dbReference type="EnsemblMetazoa" id="FBtr0345575">
    <property type="protein sequence ID" value="FBpp0311646"/>
    <property type="gene ID" value="FBgn0033302"/>
</dbReference>
<dbReference type="GeneID" id="35835"/>
<dbReference type="KEGG" id="dme:Dmel_CG8687"/>
<dbReference type="UCSC" id="CG8687-RB">
    <property type="organism name" value="d. melanogaster"/>
</dbReference>
<dbReference type="AGR" id="FB:FBgn0033302"/>
<dbReference type="CTD" id="35835"/>
<dbReference type="FlyBase" id="FBgn0033302">
    <property type="gene designation" value="Cyp6a14"/>
</dbReference>
<dbReference type="VEuPathDB" id="VectorBase:FBgn0033302"/>
<dbReference type="eggNOG" id="KOG0158">
    <property type="taxonomic scope" value="Eukaryota"/>
</dbReference>
<dbReference type="HOGENOM" id="CLU_535951_0_0_1"/>
<dbReference type="InParanoid" id="Q9V4U7"/>
<dbReference type="OMA" id="HEMKYIE"/>
<dbReference type="OrthoDB" id="2789670at2759"/>
<dbReference type="PhylomeDB" id="Q9V4U7"/>
<dbReference type="BioGRID-ORCS" id="35835">
    <property type="hits" value="0 hits in 1 CRISPR screen"/>
</dbReference>
<dbReference type="GenomeRNAi" id="35835"/>
<dbReference type="PRO" id="PR:Q9V4U7"/>
<dbReference type="Proteomes" id="UP000000803">
    <property type="component" value="Chromosome 2R"/>
</dbReference>
<dbReference type="Bgee" id="FBgn0033302">
    <property type="expression patterns" value="Expressed in spermathecum and 36 other cell types or tissues"/>
</dbReference>
<dbReference type="ExpressionAtlas" id="Q9V4U7">
    <property type="expression patterns" value="baseline and differential"/>
</dbReference>
<dbReference type="GO" id="GO:0005789">
    <property type="term" value="C:endoplasmic reticulum membrane"/>
    <property type="evidence" value="ECO:0007669"/>
    <property type="project" value="UniProtKB-SubCell"/>
</dbReference>
<dbReference type="GO" id="GO:0020037">
    <property type="term" value="F:heme binding"/>
    <property type="evidence" value="ECO:0007669"/>
    <property type="project" value="InterPro"/>
</dbReference>
<dbReference type="GO" id="GO:0005506">
    <property type="term" value="F:iron ion binding"/>
    <property type="evidence" value="ECO:0007669"/>
    <property type="project" value="InterPro"/>
</dbReference>
<dbReference type="GO" id="GO:0004497">
    <property type="term" value="F:monooxygenase activity"/>
    <property type="evidence" value="ECO:0007669"/>
    <property type="project" value="UniProtKB-KW"/>
</dbReference>
<dbReference type="GO" id="GO:0016705">
    <property type="term" value="F:oxidoreductase activity, acting on paired donors, with incorporation or reduction of molecular oxygen"/>
    <property type="evidence" value="ECO:0007669"/>
    <property type="project" value="InterPro"/>
</dbReference>
<dbReference type="CDD" id="cd11056">
    <property type="entry name" value="CYP6-like"/>
    <property type="match status" value="1"/>
</dbReference>
<dbReference type="FunFam" id="1.10.630.10:FF:000042">
    <property type="entry name" value="Cytochrome P450"/>
    <property type="match status" value="1"/>
</dbReference>
<dbReference type="Gene3D" id="1.10.630.10">
    <property type="entry name" value="Cytochrome P450"/>
    <property type="match status" value="1"/>
</dbReference>
<dbReference type="InterPro" id="IPR001128">
    <property type="entry name" value="Cyt_P450"/>
</dbReference>
<dbReference type="InterPro" id="IPR017972">
    <property type="entry name" value="Cyt_P450_CS"/>
</dbReference>
<dbReference type="InterPro" id="IPR002401">
    <property type="entry name" value="Cyt_P450_E_grp-I"/>
</dbReference>
<dbReference type="InterPro" id="IPR036396">
    <property type="entry name" value="Cyt_P450_sf"/>
</dbReference>
<dbReference type="InterPro" id="IPR050476">
    <property type="entry name" value="Insect_CytP450_Detox"/>
</dbReference>
<dbReference type="PANTHER" id="PTHR24292">
    <property type="entry name" value="CYTOCHROME P450"/>
    <property type="match status" value="1"/>
</dbReference>
<dbReference type="PANTHER" id="PTHR24292:SF100">
    <property type="entry name" value="CYTOCHROME P450 6A16, ISOFORM B-RELATED"/>
    <property type="match status" value="1"/>
</dbReference>
<dbReference type="Pfam" id="PF00067">
    <property type="entry name" value="p450"/>
    <property type="match status" value="1"/>
</dbReference>
<dbReference type="PRINTS" id="PR00463">
    <property type="entry name" value="EP450I"/>
</dbReference>
<dbReference type="PRINTS" id="PR00385">
    <property type="entry name" value="P450"/>
</dbReference>
<dbReference type="SUPFAM" id="SSF48264">
    <property type="entry name" value="Cytochrome P450"/>
    <property type="match status" value="1"/>
</dbReference>
<dbReference type="PROSITE" id="PS00086">
    <property type="entry name" value="CYTOCHROME_P450"/>
    <property type="match status" value="1"/>
</dbReference>
<sequence length="509" mass="58233">MLFTIALVGVVLGLAYSLHIKIFSYWKRKGVPHETPLPIVGNMRGIVKKYHFRDINQRIYKKFKGQGPIAGMYMFFKRTALITDLDFIKQVMIKDFSYFQDRGAFTNPRDDPLTGHLFALEGEEWRAMRHKLTPVFTSGKIKQMSKVIVDVGLRLGDAMDKAVKEAKVEEGNVEIKDLCARFTTDVIGSCAFGLECNSLQDPSAEFRQKGREIFTRRRHSTLVQSFIFTNARLARKLRIKVLPDDLTQFFMSTVKNTVDYRLKNGIKRNDFIEQMIELRAEDQEAAKKGQGIDLSHGLTLEQMAAQAFVFFVAGFETSSSTMSLCLYELALQPDIQQRLREEIESVLANVDGGELNYDVLAQMTYLDQVLSETLRKHPLLPHLIRETTKDYQIPNSDIVLDKGILALIPVHNIHHDPEIYPEPEKFDPSRFDPEEVKNRHPMAYLPFGDGPRNCIGLRFGKIQAKIGLVSLLRRFKFSVSNRTDVPLIFSKKSFLLTTNDGIYLKVERV</sequence>
<comment type="function">
    <text evidence="1">May be involved in the metabolism of insect hormones and in the breakdown of synthetic insecticides.</text>
</comment>
<comment type="cofactor">
    <cofactor evidence="1">
        <name>heme</name>
        <dbReference type="ChEBI" id="CHEBI:30413"/>
    </cofactor>
</comment>
<comment type="subcellular location">
    <subcellularLocation>
        <location evidence="2">Endoplasmic reticulum membrane</location>
        <topology evidence="2">Peripheral membrane protein</topology>
    </subcellularLocation>
    <subcellularLocation>
        <location evidence="2">Microsome membrane</location>
        <topology evidence="2">Peripheral membrane protein</topology>
    </subcellularLocation>
</comment>
<comment type="similarity">
    <text evidence="2">Belongs to the cytochrome P450 family.</text>
</comment>